<sequence>MNPIRKIIHIDMDCFYAAIEMRDFPELANKPIAVGGDAKHRGVIATCNYAARQFGIRSAMPTAHALKLCRELILRPVRMDVYQKESQYIRSLLTEYTDLIEPLSLDEAYLDVTESTQCQGSATWIAEEIRARIYQTRQLTASAGIAPNKSLAKIASDWHKPNGQMVIRPEDVSAFVLDLPVRKLFGVGPKMEEKLGALNIKTCADLQRYSIEYLLQKFGTMGQRLYELARGIDNRPVNPERIRKSISVEETYPKDLPNSEACLAVLPDLMARLEARIQRAGKISGIHNLFVKLKFNDFQQTTIERVMDKIDLIVLRQLIQEGFARRGMPVRLLGIGIKLKQENTYQSVQLPLLDL</sequence>
<evidence type="ECO:0000255" key="1">
    <source>
        <dbReference type="HAMAP-Rule" id="MF_01113"/>
    </source>
</evidence>
<feature type="chain" id="PRO_1000137140" description="DNA polymerase IV">
    <location>
        <begin position="1"/>
        <end position="355"/>
    </location>
</feature>
<feature type="domain" description="UmuC" evidence="1">
    <location>
        <begin position="7"/>
        <end position="188"/>
    </location>
</feature>
<feature type="active site" evidence="1">
    <location>
        <position position="107"/>
    </location>
</feature>
<feature type="binding site" evidence="1">
    <location>
        <position position="11"/>
    </location>
    <ligand>
        <name>Mg(2+)</name>
        <dbReference type="ChEBI" id="CHEBI:18420"/>
    </ligand>
</feature>
<feature type="binding site" evidence="1">
    <location>
        <position position="106"/>
    </location>
    <ligand>
        <name>Mg(2+)</name>
        <dbReference type="ChEBI" id="CHEBI:18420"/>
    </ligand>
</feature>
<feature type="site" description="Substrate discrimination" evidence="1">
    <location>
        <position position="16"/>
    </location>
</feature>
<proteinExistence type="inferred from homology"/>
<protein>
    <recommendedName>
        <fullName evidence="1">DNA polymerase IV</fullName>
        <shortName evidence="1">Pol IV</shortName>
        <ecNumber evidence="1">2.7.7.7</ecNumber>
    </recommendedName>
</protein>
<gene>
    <name evidence="1" type="primary">dinB</name>
    <name type="ordered locus">lpl0597</name>
</gene>
<keyword id="KW-0963">Cytoplasm</keyword>
<keyword id="KW-0227">DNA damage</keyword>
<keyword id="KW-0234">DNA repair</keyword>
<keyword id="KW-0235">DNA replication</keyword>
<keyword id="KW-0238">DNA-binding</keyword>
<keyword id="KW-0239">DNA-directed DNA polymerase</keyword>
<keyword id="KW-0460">Magnesium</keyword>
<keyword id="KW-0479">Metal-binding</keyword>
<keyword id="KW-0515">Mutator protein</keyword>
<keyword id="KW-0548">Nucleotidyltransferase</keyword>
<keyword id="KW-0808">Transferase</keyword>
<dbReference type="EC" id="2.7.7.7" evidence="1"/>
<dbReference type="EMBL" id="CR628337">
    <property type="protein sequence ID" value="CAH14830.1"/>
    <property type="molecule type" value="Genomic_DNA"/>
</dbReference>
<dbReference type="RefSeq" id="WP_011214786.1">
    <property type="nucleotide sequence ID" value="NC_006369.1"/>
</dbReference>
<dbReference type="SMR" id="Q5WYY8"/>
<dbReference type="KEGG" id="lpf:lpl0597"/>
<dbReference type="LegioList" id="lpl0597"/>
<dbReference type="HOGENOM" id="CLU_012348_1_2_6"/>
<dbReference type="Proteomes" id="UP000002517">
    <property type="component" value="Chromosome"/>
</dbReference>
<dbReference type="GO" id="GO:0005829">
    <property type="term" value="C:cytosol"/>
    <property type="evidence" value="ECO:0007669"/>
    <property type="project" value="TreeGrafter"/>
</dbReference>
<dbReference type="GO" id="GO:0003684">
    <property type="term" value="F:damaged DNA binding"/>
    <property type="evidence" value="ECO:0007669"/>
    <property type="project" value="InterPro"/>
</dbReference>
<dbReference type="GO" id="GO:0003887">
    <property type="term" value="F:DNA-directed DNA polymerase activity"/>
    <property type="evidence" value="ECO:0007669"/>
    <property type="project" value="UniProtKB-UniRule"/>
</dbReference>
<dbReference type="GO" id="GO:0000287">
    <property type="term" value="F:magnesium ion binding"/>
    <property type="evidence" value="ECO:0007669"/>
    <property type="project" value="UniProtKB-UniRule"/>
</dbReference>
<dbReference type="GO" id="GO:0006261">
    <property type="term" value="P:DNA-templated DNA replication"/>
    <property type="evidence" value="ECO:0007669"/>
    <property type="project" value="UniProtKB-UniRule"/>
</dbReference>
<dbReference type="GO" id="GO:0042276">
    <property type="term" value="P:error-prone translesion synthesis"/>
    <property type="evidence" value="ECO:0007669"/>
    <property type="project" value="TreeGrafter"/>
</dbReference>
<dbReference type="GO" id="GO:0009432">
    <property type="term" value="P:SOS response"/>
    <property type="evidence" value="ECO:0007669"/>
    <property type="project" value="TreeGrafter"/>
</dbReference>
<dbReference type="CDD" id="cd03586">
    <property type="entry name" value="PolY_Pol_IV_kappa"/>
    <property type="match status" value="1"/>
</dbReference>
<dbReference type="FunFam" id="1.10.150.20:FF:000019">
    <property type="entry name" value="DNA polymerase IV"/>
    <property type="match status" value="1"/>
</dbReference>
<dbReference type="FunFam" id="3.40.1170.60:FF:000001">
    <property type="entry name" value="DNA polymerase IV"/>
    <property type="match status" value="1"/>
</dbReference>
<dbReference type="Gene3D" id="3.30.70.270">
    <property type="match status" value="1"/>
</dbReference>
<dbReference type="Gene3D" id="3.40.1170.60">
    <property type="match status" value="1"/>
</dbReference>
<dbReference type="Gene3D" id="1.10.150.20">
    <property type="entry name" value="5' to 3' exonuclease, C-terminal subdomain"/>
    <property type="match status" value="1"/>
</dbReference>
<dbReference type="Gene3D" id="3.30.1490.100">
    <property type="entry name" value="DNA polymerase, Y-family, little finger domain"/>
    <property type="match status" value="1"/>
</dbReference>
<dbReference type="HAMAP" id="MF_01113">
    <property type="entry name" value="DNApol_IV"/>
    <property type="match status" value="1"/>
</dbReference>
<dbReference type="InterPro" id="IPR043502">
    <property type="entry name" value="DNA/RNA_pol_sf"/>
</dbReference>
<dbReference type="InterPro" id="IPR036775">
    <property type="entry name" value="DNA_pol_Y-fam_lit_finger_sf"/>
</dbReference>
<dbReference type="InterPro" id="IPR017961">
    <property type="entry name" value="DNA_pol_Y-fam_little_finger"/>
</dbReference>
<dbReference type="InterPro" id="IPR050116">
    <property type="entry name" value="DNA_polymerase-Y"/>
</dbReference>
<dbReference type="InterPro" id="IPR022880">
    <property type="entry name" value="DNApol_IV"/>
</dbReference>
<dbReference type="InterPro" id="IPR053848">
    <property type="entry name" value="IMS_HHH_1"/>
</dbReference>
<dbReference type="InterPro" id="IPR043128">
    <property type="entry name" value="Rev_trsase/Diguanyl_cyclase"/>
</dbReference>
<dbReference type="InterPro" id="IPR001126">
    <property type="entry name" value="UmuC"/>
</dbReference>
<dbReference type="NCBIfam" id="NF002677">
    <property type="entry name" value="PRK02406.1"/>
    <property type="match status" value="1"/>
</dbReference>
<dbReference type="PANTHER" id="PTHR11076:SF33">
    <property type="entry name" value="DNA POLYMERASE KAPPA"/>
    <property type="match status" value="1"/>
</dbReference>
<dbReference type="PANTHER" id="PTHR11076">
    <property type="entry name" value="DNA REPAIR POLYMERASE UMUC / TRANSFERASE FAMILY MEMBER"/>
    <property type="match status" value="1"/>
</dbReference>
<dbReference type="Pfam" id="PF00817">
    <property type="entry name" value="IMS"/>
    <property type="match status" value="1"/>
</dbReference>
<dbReference type="Pfam" id="PF11799">
    <property type="entry name" value="IMS_C"/>
    <property type="match status" value="1"/>
</dbReference>
<dbReference type="Pfam" id="PF21999">
    <property type="entry name" value="IMS_HHH_1"/>
    <property type="match status" value="1"/>
</dbReference>
<dbReference type="SUPFAM" id="SSF56672">
    <property type="entry name" value="DNA/RNA polymerases"/>
    <property type="match status" value="1"/>
</dbReference>
<dbReference type="SUPFAM" id="SSF100879">
    <property type="entry name" value="Lesion bypass DNA polymerase (Y-family), little finger domain"/>
    <property type="match status" value="1"/>
</dbReference>
<dbReference type="PROSITE" id="PS50173">
    <property type="entry name" value="UMUC"/>
    <property type="match status" value="1"/>
</dbReference>
<comment type="function">
    <text evidence="1">Poorly processive, error-prone DNA polymerase involved in untargeted mutagenesis. Copies undamaged DNA at stalled replication forks, which arise in vivo from mismatched or misaligned primer ends. These misaligned primers can be extended by PolIV. Exhibits no 3'-5' exonuclease (proofreading) activity. May be involved in translesional synthesis, in conjunction with the beta clamp from PolIII.</text>
</comment>
<comment type="catalytic activity">
    <reaction evidence="1">
        <text>DNA(n) + a 2'-deoxyribonucleoside 5'-triphosphate = DNA(n+1) + diphosphate</text>
        <dbReference type="Rhea" id="RHEA:22508"/>
        <dbReference type="Rhea" id="RHEA-COMP:17339"/>
        <dbReference type="Rhea" id="RHEA-COMP:17340"/>
        <dbReference type="ChEBI" id="CHEBI:33019"/>
        <dbReference type="ChEBI" id="CHEBI:61560"/>
        <dbReference type="ChEBI" id="CHEBI:173112"/>
        <dbReference type="EC" id="2.7.7.7"/>
    </reaction>
</comment>
<comment type="cofactor">
    <cofactor evidence="1">
        <name>Mg(2+)</name>
        <dbReference type="ChEBI" id="CHEBI:18420"/>
    </cofactor>
    <text evidence="1">Binds 2 magnesium ions per subunit.</text>
</comment>
<comment type="subunit">
    <text evidence="1">Monomer.</text>
</comment>
<comment type="subcellular location">
    <subcellularLocation>
        <location evidence="1">Cytoplasm</location>
    </subcellularLocation>
</comment>
<comment type="similarity">
    <text evidence="1">Belongs to the DNA polymerase type-Y family.</text>
</comment>
<reference key="1">
    <citation type="journal article" date="2004" name="Nat. Genet.">
        <title>Evidence in the Legionella pneumophila genome for exploitation of host cell functions and high genome plasticity.</title>
        <authorList>
            <person name="Cazalet C."/>
            <person name="Rusniok C."/>
            <person name="Brueggemann H."/>
            <person name="Zidane N."/>
            <person name="Magnier A."/>
            <person name="Ma L."/>
            <person name="Tichit M."/>
            <person name="Jarraud S."/>
            <person name="Bouchier C."/>
            <person name="Vandenesch F."/>
            <person name="Kunst F."/>
            <person name="Etienne J."/>
            <person name="Glaser P."/>
            <person name="Buchrieser C."/>
        </authorList>
    </citation>
    <scope>NUCLEOTIDE SEQUENCE [LARGE SCALE GENOMIC DNA]</scope>
    <source>
        <strain>Lens</strain>
    </source>
</reference>
<name>DPO4_LEGPL</name>
<organism>
    <name type="scientific">Legionella pneumophila (strain Lens)</name>
    <dbReference type="NCBI Taxonomy" id="297245"/>
    <lineage>
        <taxon>Bacteria</taxon>
        <taxon>Pseudomonadati</taxon>
        <taxon>Pseudomonadota</taxon>
        <taxon>Gammaproteobacteria</taxon>
        <taxon>Legionellales</taxon>
        <taxon>Legionellaceae</taxon>
        <taxon>Legionella</taxon>
    </lineage>
</organism>
<accession>Q5WYY8</accession>